<keyword id="KW-0963">Cytoplasm</keyword>
<keyword id="KW-0690">Ribosome biogenesis</keyword>
<keyword id="KW-0694">RNA-binding</keyword>
<keyword id="KW-0699">rRNA-binding</keyword>
<proteinExistence type="inferred from homology"/>
<reference key="1">
    <citation type="submission" date="2008-02" db="EMBL/GenBank/DDBJ databases">
        <title>Complete sequence of Escherichia coli C str. ATCC 8739.</title>
        <authorList>
            <person name="Copeland A."/>
            <person name="Lucas S."/>
            <person name="Lapidus A."/>
            <person name="Glavina del Rio T."/>
            <person name="Dalin E."/>
            <person name="Tice H."/>
            <person name="Bruce D."/>
            <person name="Goodwin L."/>
            <person name="Pitluck S."/>
            <person name="Kiss H."/>
            <person name="Brettin T."/>
            <person name="Detter J.C."/>
            <person name="Han C."/>
            <person name="Kuske C.R."/>
            <person name="Schmutz J."/>
            <person name="Larimer F."/>
            <person name="Land M."/>
            <person name="Hauser L."/>
            <person name="Kyrpides N."/>
            <person name="Mikhailova N."/>
            <person name="Ingram L."/>
            <person name="Richardson P."/>
        </authorList>
    </citation>
    <scope>NUCLEOTIDE SEQUENCE [LARGE SCALE GENOMIC DNA]</scope>
    <source>
        <strain>ATCC 8739 / DSM 1576 / NBRC 3972 / NCIMB 8545 / WDCM 00012 / Crooks</strain>
    </source>
</reference>
<sequence>MTKQPEDWLDDVPGDDIEDEDDEIIWVSKSEIKRDAEELKRLGAEIVDLGKNALDKIPLDADLRAAIELAQRIKMEGRRRQLQLIGKMLRQRDVEPIRQALDKLKNRHNQQVVLFHKLENLRDRLIDQGDDAIAEVLNLWPDADRQQLRTLIRNAKKEKEGNKPPKSARQIFQYLRELAENEG</sequence>
<protein>
    <recommendedName>
        <fullName evidence="1">Dual-action ribosomal maturation protein DarP</fullName>
    </recommendedName>
    <alternativeName>
        <fullName evidence="1">Large ribosomal subunit assembly factor DarP</fullName>
    </alternativeName>
</protein>
<feature type="chain" id="PRO_1000083534" description="Dual-action ribosomal maturation protein DarP">
    <location>
        <begin position="1"/>
        <end position="183"/>
    </location>
</feature>
<accession>B1ISX1</accession>
<name>DARP_ECOLC</name>
<dbReference type="EMBL" id="CP000946">
    <property type="protein sequence ID" value="ACA79382.1"/>
    <property type="molecule type" value="Genomic_DNA"/>
</dbReference>
<dbReference type="SMR" id="B1ISX1"/>
<dbReference type="KEGG" id="ecl:EcolC_3777"/>
<dbReference type="HOGENOM" id="CLU_106757_2_0_6"/>
<dbReference type="GO" id="GO:0005829">
    <property type="term" value="C:cytosol"/>
    <property type="evidence" value="ECO:0007669"/>
    <property type="project" value="TreeGrafter"/>
</dbReference>
<dbReference type="GO" id="GO:0043022">
    <property type="term" value="F:ribosome binding"/>
    <property type="evidence" value="ECO:0007669"/>
    <property type="project" value="UniProtKB-UniRule"/>
</dbReference>
<dbReference type="GO" id="GO:0019843">
    <property type="term" value="F:rRNA binding"/>
    <property type="evidence" value="ECO:0007669"/>
    <property type="project" value="UniProtKB-UniRule"/>
</dbReference>
<dbReference type="GO" id="GO:1902626">
    <property type="term" value="P:assembly of large subunit precursor of preribosome"/>
    <property type="evidence" value="ECO:0007669"/>
    <property type="project" value="UniProtKB-UniRule"/>
</dbReference>
<dbReference type="CDD" id="cd16331">
    <property type="entry name" value="YjgA-like"/>
    <property type="match status" value="1"/>
</dbReference>
<dbReference type="FunFam" id="1.10.60.30:FF:000001">
    <property type="entry name" value="UPF0307 protein YjgA"/>
    <property type="match status" value="1"/>
</dbReference>
<dbReference type="FunFam" id="1.10.60.30:FF:000002">
    <property type="entry name" value="UPF0307 protein YjgA"/>
    <property type="match status" value="1"/>
</dbReference>
<dbReference type="Gene3D" id="1.10.60.30">
    <property type="entry name" value="PSPTO4464-like domains"/>
    <property type="match status" value="2"/>
</dbReference>
<dbReference type="HAMAP" id="MF_00765">
    <property type="entry name" value="DarP"/>
    <property type="match status" value="1"/>
</dbReference>
<dbReference type="InterPro" id="IPR006839">
    <property type="entry name" value="DarP"/>
</dbReference>
<dbReference type="InterPro" id="IPR023153">
    <property type="entry name" value="DarP_sf"/>
</dbReference>
<dbReference type="NCBIfam" id="NF003593">
    <property type="entry name" value="PRK05255.1-1"/>
    <property type="match status" value="1"/>
</dbReference>
<dbReference type="PANTHER" id="PTHR38101">
    <property type="entry name" value="UPF0307 PROTEIN YJGA"/>
    <property type="match status" value="1"/>
</dbReference>
<dbReference type="PANTHER" id="PTHR38101:SF1">
    <property type="entry name" value="UPF0307 PROTEIN YJGA"/>
    <property type="match status" value="1"/>
</dbReference>
<dbReference type="Pfam" id="PF04751">
    <property type="entry name" value="DarP"/>
    <property type="match status" value="1"/>
</dbReference>
<dbReference type="PIRSF" id="PIRSF016183">
    <property type="entry name" value="UCP016183"/>
    <property type="match status" value="1"/>
</dbReference>
<dbReference type="SUPFAM" id="SSF158710">
    <property type="entry name" value="PSPTO4464-like"/>
    <property type="match status" value="1"/>
</dbReference>
<evidence type="ECO:0000255" key="1">
    <source>
        <dbReference type="HAMAP-Rule" id="MF_00765"/>
    </source>
</evidence>
<organism>
    <name type="scientific">Escherichia coli (strain ATCC 8739 / DSM 1576 / NBRC 3972 / NCIMB 8545 / WDCM 00012 / Crooks)</name>
    <dbReference type="NCBI Taxonomy" id="481805"/>
    <lineage>
        <taxon>Bacteria</taxon>
        <taxon>Pseudomonadati</taxon>
        <taxon>Pseudomonadota</taxon>
        <taxon>Gammaproteobacteria</taxon>
        <taxon>Enterobacterales</taxon>
        <taxon>Enterobacteriaceae</taxon>
        <taxon>Escherichia</taxon>
    </lineage>
</organism>
<comment type="function">
    <text evidence="1">Member of a network of 50S ribosomal subunit biogenesis factors which assembles along the 30S-50S interface, preventing incorrect 23S rRNA structures from forming. Promotes peptidyl transferase center (PTC) maturation.</text>
</comment>
<comment type="subcellular location">
    <subcellularLocation>
        <location evidence="1">Cytoplasm</location>
    </subcellularLocation>
    <text evidence="1">Associates with late stage pre-50S ribosomal subunits.</text>
</comment>
<comment type="similarity">
    <text evidence="1">Belongs to the DarP family.</text>
</comment>
<gene>
    <name evidence="1" type="primary">darP</name>
    <name type="ordered locus">EcolC_3777</name>
</gene>